<sequence>MKVLTTALLLVTLQCSHALSPTNCDASEPLAEKVLDLINKGRRSGYVFELLRVSDAHLDRAGTATVYYLALDVIESDCWVLSTKAQDDCLPSRWQSEIVIGQCKVIATRYSNESQDLSVNGYNCTTSSVSSALRNTKDSPVLLDFFEDSELYRKQARKALDKYKTDNGDFASFRVERAERVIRARGGERTNYYVEFSMRNCSTQHFPRSPLVFGFCRALLSYSIETSDLETPDSIDINCEVFNIEDHKDTSDMKPHWGHERPLCDKHLCKLSGSRDHHHTHKTDKLGCPPPPEGKDNSDRPRLQEGALPQLPPGYPPHSGANRTHRPSYNHSCNEHPCHGHRPHGHHPHSHHPPGHHSHGHHPHGHHPHSHHSHGHHPPGHHPHGHHPHGHHPHGHHPHGHHPHGHDFLDYGPCDPPSNSQELKGQYHRGYGPPHGHSRKRGPGKGLFPFHHQQIGYVYRLPPLNIGEVLTLPEANFPSFSLPNCNRSLQPEIQPFPQTASRSCPGKFESEFPQISKFFGYTPPK</sequence>
<name>HRG_MOUSE</name>
<feature type="signal peptide" evidence="1">
    <location>
        <begin position="1"/>
        <end position="18"/>
    </location>
</feature>
<feature type="chain" id="PRO_0000408507" description="Histidine-rich glycoprotein">
    <location>
        <begin position="19"/>
        <end position="525"/>
    </location>
</feature>
<feature type="domain" description="Cystatin 1">
    <location>
        <begin position="19"/>
        <end position="122"/>
    </location>
</feature>
<feature type="domain" description="Cystatin 2">
    <location>
        <begin position="135"/>
        <end position="240"/>
    </location>
</feature>
<feature type="region of interest" description="Interaction with ATP5F1A" evidence="1">
    <location>
        <begin position="41"/>
        <end position="84"/>
    </location>
</feature>
<feature type="region of interest" description="Disordered" evidence="4">
    <location>
        <begin position="273"/>
        <end position="447"/>
    </location>
</feature>
<feature type="region of interest" description="Necessary for endothelial cell focal adhesions and anti-angiogenic activities" evidence="1">
    <location>
        <begin position="345"/>
        <end position="379"/>
    </location>
</feature>
<feature type="compositionally biased region" description="Basic and acidic residues" evidence="4">
    <location>
        <begin position="293"/>
        <end position="303"/>
    </location>
</feature>
<feature type="compositionally biased region" description="Basic residues" evidence="4">
    <location>
        <begin position="339"/>
        <end position="404"/>
    </location>
</feature>
<feature type="site" description="Cleavage; by plasmin" evidence="1">
    <location>
        <begin position="439"/>
        <end position="440"/>
    </location>
</feature>
<feature type="modified residue" description="Phosphoserine" evidence="2">
    <location>
        <position position="438"/>
    </location>
</feature>
<feature type="glycosylation site" description="N-linked (GlcNAc...) asparagine" evidence="3">
    <location>
        <position position="112"/>
    </location>
</feature>
<feature type="glycosylation site" description="N-linked (GlcNAc...) asparagine" evidence="3">
    <location>
        <position position="123"/>
    </location>
</feature>
<feature type="glycosylation site" description="N-linked (GlcNAc...) asparagine" evidence="8">
    <location>
        <position position="200"/>
    </location>
</feature>
<feature type="glycosylation site" description="N-linked (GlcNAc...) asparagine" evidence="3">
    <location>
        <position position="322"/>
    </location>
</feature>
<feature type="glycosylation site" description="N-linked (GlcNAc...) asparagine" evidence="3">
    <location>
        <position position="330"/>
    </location>
</feature>
<feature type="disulfide bond" evidence="1">
    <location>
        <begin position="24"/>
        <end position="504"/>
    </location>
</feature>
<feature type="disulfide bond" evidence="1">
    <location>
        <begin position="78"/>
        <end position="89"/>
    </location>
</feature>
<feature type="disulfide bond" evidence="1">
    <location>
        <begin position="103"/>
        <end position="124"/>
    </location>
</feature>
<feature type="disulfide bond" evidence="1">
    <location>
        <begin position="201"/>
        <end position="414"/>
    </location>
</feature>
<feature type="disulfide bond" evidence="1">
    <location>
        <begin position="216"/>
        <end position="239"/>
    </location>
</feature>
<feature type="sequence conflict" description="In Ref. 1; AAG28416." evidence="13" ref="1">
    <original>T</original>
    <variation>A</variation>
    <location>
        <position position="6"/>
    </location>
</feature>
<feature type="sequence conflict" description="In Ref. 3; BAB33094." evidence="13" ref="3">
    <original>E</original>
    <variation>G</variation>
    <location>
        <position position="511"/>
    </location>
</feature>
<protein>
    <recommendedName>
        <fullName>Histidine-rich glycoprotein</fullName>
    </recommendedName>
    <alternativeName>
        <fullName>Histidine-proline-rich glycoprotein</fullName>
        <shortName>HPRG</shortName>
    </alternativeName>
</protein>
<evidence type="ECO:0000250" key="1"/>
<evidence type="ECO:0000250" key="2">
    <source>
        <dbReference type="UniProtKB" id="Q99PS8"/>
    </source>
</evidence>
<evidence type="ECO:0000255" key="3"/>
<evidence type="ECO:0000256" key="4">
    <source>
        <dbReference type="SAM" id="MobiDB-lite"/>
    </source>
</evidence>
<evidence type="ECO:0000269" key="5">
    <source>
    </source>
</evidence>
<evidence type="ECO:0000269" key="6">
    <source>
    </source>
</evidence>
<evidence type="ECO:0000269" key="7">
    <source>
    </source>
</evidence>
<evidence type="ECO:0000269" key="8">
    <source>
    </source>
</evidence>
<evidence type="ECO:0000269" key="9">
    <source>
    </source>
</evidence>
<evidence type="ECO:0000269" key="10">
    <source>
    </source>
</evidence>
<evidence type="ECO:0000269" key="11">
    <source>
    </source>
</evidence>
<evidence type="ECO:0000269" key="12">
    <source>
    </source>
</evidence>
<evidence type="ECO:0000305" key="13"/>
<gene>
    <name type="primary">Hrg</name>
</gene>
<proteinExistence type="evidence at protein level"/>
<accession>Q9ESB3</accession>
<accession>Q6YK32</accession>
<accession>Q6YKA2</accession>
<accession>Q99PS5</accession>
<accession>Q99PS6</accession>
<keyword id="KW-0037">Angiogenesis</keyword>
<keyword id="KW-0094">Blood coagulation</keyword>
<keyword id="KW-0145">Chemotaxis</keyword>
<keyword id="KW-0165">Cleavage on pair of basic residues</keyword>
<keyword id="KW-0186">Copper</keyword>
<keyword id="KW-1015">Disulfide bond</keyword>
<keyword id="KW-0280">Fibrinolysis</keyword>
<keyword id="KW-0325">Glycoprotein</keyword>
<keyword id="KW-0356">Hemostasis</keyword>
<keyword id="KW-0358">Heparin-binding</keyword>
<keyword id="KW-0479">Metal-binding</keyword>
<keyword id="KW-0597">Phosphoprotein</keyword>
<keyword id="KW-1185">Reference proteome</keyword>
<keyword id="KW-0677">Repeat</keyword>
<keyword id="KW-0964">Secreted</keyword>
<keyword id="KW-0732">Signal</keyword>
<keyword id="KW-0862">Zinc</keyword>
<comment type="function">
    <text evidence="1 6 7 9 10 12">Plasma glycoprotein that binds a number of ligands such as heme, heparin, heparan sulfate, thrombospondin, plasminogen, and divalent metal ions. Binds heparin and heparin/glycosaminoglycans in a zinc-dependent manner. Binds heparan sulfate on the surface of liver, lung, kidney and heart endothelial cells. Binds to N-sulfated polysaccharide chains on the surface of liver endothelial cells. Inhibits rosette formation. Acts as an adapter protein and is implicated in regulating many processes such as immune complex and pathogen clearance, cell chemotaxis, cell adhesion, angiogenesis, coagulation and fibrinolysis. Mediates clearance of necrotic cells through enhancing the phagocytosis of necrotic cells in a heparan sulfate-dependent pathway. This process can be regulated by the presence of certain HRG ligands such as heparin and zinc ions. Binds to IgG subclasses of immunoglobins containing kappa and lambda light chains with different affinities regulating their clearance and inhibiting the formation of insoluble immune complexes. Tethers plasminogen to the cell surface. Binds T-cells and alters the cell morphology. Acts as a regulator of the vascular endothelial growth factor (VEGF) signaling pathway; inhibits endothelial cell motility by reducing VEGF-induced complex formation between PXN/paxillin and ILK/integrin-linked protein kinase and by promoting inhibition of VEGF-induced tyrosine phosphorylation of focal adhesion kinases and alpha-actinins in endothelial cells. Also plays a role in the regulation of tumor angiogenesis and tumor immune surveillance. Normalizes tumor vessels and promotes antitumor immunity by polarizing tumor-associated macrophages, leading to decreased tumor growth and metastasis (By similarity). Modulates angiogenesis by blocking the CD6-mediated antiangiongenic effect of thrombospondins, THBS1 and THBS2.</text>
</comment>
<comment type="cofactor">
    <cofactor evidence="1">
        <name>Zn(2+)</name>
        <dbReference type="ChEBI" id="CHEBI:29105"/>
    </cofactor>
</comment>
<comment type="subunit">
    <text evidence="1 6">Interacts with THBS1 (via the TSP type I repeats); the interaction blocks the antiangiogenic effect of THBS1 with CD36. Interacts with HPSE; the interaction is enhanced at acidic pH, partially inhibits binding of HPSE to cell surface receptors and modulates its enzymatic activity. Interacts (via the HRR domain) with TMP1; the interaction partially mediates the antiangiogenic properties of HRG. Interacts with kappa and lambda light chains of IgG molecules. Interacts with ATP5F1A; the interaction occurs on the surface of T-cells and alters their cell morphology in concert with CONA. Binds IgG molecules containing kappa and lambda light chains and inhibits the formation of insoluble immunoglobulin complexes. Interacts with F12; the interaction, which is enhanced in the presence of zinc ions and inhibited by heparin-binding to HRG, inhibits factor XII autoactivation and contact-initiated coagulation (By similarity). Interacts with PLG (via its Kringle domains); the interaction tethers PLG to the cell surface and enhances its activation. Interacts (via the HRR domain) with TPM1; the interaction appears to contribute to the antiangiogenic properties of the HRR domain (By similarity). Interacts with THBS2; the interaction blocks the antiangiogenic effect of THBS2 with CD36.</text>
</comment>
<comment type="subcellular location">
    <subcellularLocation>
        <location>Secreted</location>
    </subcellularLocation>
</comment>
<comment type="tissue specificity">
    <text evidence="5 9">Expressed in liver, blood plasma, serum and in platelets. Also present in fibrin clots, wound fluid from acute wounds and chronic leg ulcers.</text>
</comment>
<comment type="domain">
    <text>The His-rich (HRR) region contains approximately 12 tandem internal repeats of the 5-residue G[H/P][H/P]PH consensus sequence. HRR binds heparan sulfate and possesses antiangiogenic, antibacterial and antifungal properties through binding Candida cells, and preferentially lysing the ergosterol-containing liposomes at low pH. The tandem repeats also bind divalent metal ions and heme.</text>
</comment>
<comment type="domain">
    <text evidence="1">The cystatin domains can also bind heparan sulfate. Binding is enhanced in the presence of zinc ions (By similarity).</text>
</comment>
<comment type="PTM">
    <text evidence="1">Proteolytic cleavage produces several HRG fragments which are mostly disulfide-linked and, therefore, not released. Cleavage by plasmin is inhibited in the presence of heparin, zinc ions or in an acidic environment. Cleavage reduces binding of HRG to heparan sulfate, but enhances the ability of HRG to bind and tether plasminogen to the cell surface. On platelet activation, releases a 33 kDa antiangiogenic peptide which encompasses the HRR. Also cleaved in the C-terminal by plasmin (By similarity).</text>
</comment>
<comment type="PTM">
    <text evidence="8">N-glycosylated.</text>
</comment>
<comment type="disruption phenotype">
    <text evidence="7 9 10 11 12">Null mice are viable and fertile, but have enhanced coagulation resulting in decreased bleeding times. The observed enhanced platelet activation mediates the accelerated angiogenic switch. Also enhanced fibrinolysis. Animals are unprotected against Candida fungal infection. Also shows larger tumor volume in cancerous state, an excessive stimulation of tumor angiogenesis, a suppression of tumor immune respons and an increased tumor growth and metastatic spread.</text>
</comment>
<comment type="sequence caution" evidence="13">
    <conflict type="erroneous initiation">
        <sequence resource="EMBL-CDS" id="AAN10183"/>
    </conflict>
    <text>Extended N-terminus.</text>
</comment>
<comment type="sequence caution" evidence="13">
    <conflict type="erroneous gene model prediction">
        <sequence resource="EMBL-CDS" id="AAN27996"/>
    </conflict>
</comment>
<dbReference type="EMBL" id="AF194028">
    <property type="protein sequence ID" value="AAG28416.1"/>
    <property type="molecule type" value="mRNA"/>
</dbReference>
<dbReference type="EMBL" id="AY135662">
    <property type="protein sequence ID" value="AAN10183.1"/>
    <property type="status" value="ALT_INIT"/>
    <property type="molecule type" value="mRNA"/>
</dbReference>
<dbReference type="EMBL" id="AY137504">
    <property type="protein sequence ID" value="AAN27996.1"/>
    <property type="status" value="ALT_SEQ"/>
    <property type="molecule type" value="Genomic_DNA"/>
</dbReference>
<dbReference type="EMBL" id="AB055897">
    <property type="protein sequence ID" value="BAB33094.1"/>
    <property type="molecule type" value="mRNA"/>
</dbReference>
<dbReference type="EMBL" id="AB055898">
    <property type="protein sequence ID" value="BAB33095.1"/>
    <property type="molecule type" value="Genomic_DNA"/>
</dbReference>
<dbReference type="EMBL" id="BC011168">
    <property type="protein sequence ID" value="AAH11168.1"/>
    <property type="molecule type" value="mRNA"/>
</dbReference>
<dbReference type="RefSeq" id="NP_444406.2">
    <property type="nucleotide sequence ID" value="NM_053176.2"/>
</dbReference>
<dbReference type="SMR" id="Q9ESB3"/>
<dbReference type="BioGRID" id="220456">
    <property type="interactions" value="3"/>
</dbReference>
<dbReference type="FunCoup" id="Q9ESB3">
    <property type="interactions" value="131"/>
</dbReference>
<dbReference type="IntAct" id="Q9ESB3">
    <property type="interactions" value="2"/>
</dbReference>
<dbReference type="STRING" id="10090.ENSMUSP00000023590"/>
<dbReference type="MEROPS" id="I25.022"/>
<dbReference type="MEROPS" id="I25.025"/>
<dbReference type="GlyCosmos" id="Q9ESB3">
    <property type="glycosylation" value="5 sites, No reported glycans"/>
</dbReference>
<dbReference type="GlyGen" id="Q9ESB3">
    <property type="glycosylation" value="6 sites, 3 N-linked glycans (3 sites), 1 O-linked glycan (1 site)"/>
</dbReference>
<dbReference type="iPTMnet" id="Q9ESB3"/>
<dbReference type="PhosphoSitePlus" id="Q9ESB3"/>
<dbReference type="SwissPalm" id="Q9ESB3"/>
<dbReference type="CPTAC" id="non-CPTAC-3299"/>
<dbReference type="CPTAC" id="non-CPTAC-5610"/>
<dbReference type="jPOST" id="Q9ESB3"/>
<dbReference type="PaxDb" id="10090-ENSMUSP00000023590"/>
<dbReference type="PeptideAtlas" id="Q9ESB3"/>
<dbReference type="ProteomicsDB" id="267157"/>
<dbReference type="DNASU" id="94175"/>
<dbReference type="GeneID" id="94175"/>
<dbReference type="KEGG" id="mmu:94175"/>
<dbReference type="UCSC" id="uc007ysw.2">
    <property type="organism name" value="mouse"/>
</dbReference>
<dbReference type="AGR" id="MGI:2146636"/>
<dbReference type="CTD" id="3273"/>
<dbReference type="MGI" id="MGI:2146636">
    <property type="gene designation" value="Hrg"/>
</dbReference>
<dbReference type="eggNOG" id="ENOG502S50D">
    <property type="taxonomic scope" value="Eukaryota"/>
</dbReference>
<dbReference type="InParanoid" id="Q9ESB3"/>
<dbReference type="OrthoDB" id="9941887at2759"/>
<dbReference type="TreeFam" id="TF333729"/>
<dbReference type="Reactome" id="R-MMU-114608">
    <property type="pathway name" value="Platelet degranulation"/>
</dbReference>
<dbReference type="Reactome" id="R-MMU-75205">
    <property type="pathway name" value="Dissolution of Fibrin Clot"/>
</dbReference>
<dbReference type="BioGRID-ORCS" id="94175">
    <property type="hits" value="0 hits in 77 CRISPR screens"/>
</dbReference>
<dbReference type="ChiTaRS" id="Nrg1">
    <property type="organism name" value="mouse"/>
</dbReference>
<dbReference type="PRO" id="PR:Q9ESB3"/>
<dbReference type="Proteomes" id="UP000000589">
    <property type="component" value="Unplaced"/>
</dbReference>
<dbReference type="RNAct" id="Q9ESB3">
    <property type="molecule type" value="protein"/>
</dbReference>
<dbReference type="GO" id="GO:0062023">
    <property type="term" value="C:collagen-containing extracellular matrix"/>
    <property type="evidence" value="ECO:0007005"/>
    <property type="project" value="BHF-UCL"/>
</dbReference>
<dbReference type="GO" id="GO:0005576">
    <property type="term" value="C:extracellular region"/>
    <property type="evidence" value="ECO:0007669"/>
    <property type="project" value="UniProtKB-SubCell"/>
</dbReference>
<dbReference type="GO" id="GO:0004869">
    <property type="term" value="F:cysteine-type endopeptidase inhibitor activity"/>
    <property type="evidence" value="ECO:0007669"/>
    <property type="project" value="InterPro"/>
</dbReference>
<dbReference type="GO" id="GO:0020037">
    <property type="term" value="F:heme binding"/>
    <property type="evidence" value="ECO:0000250"/>
    <property type="project" value="UniProtKB"/>
</dbReference>
<dbReference type="GO" id="GO:0043395">
    <property type="term" value="F:heparan sulfate proteoglycan binding"/>
    <property type="evidence" value="ECO:0000250"/>
    <property type="project" value="UniProtKB"/>
</dbReference>
<dbReference type="GO" id="GO:0008201">
    <property type="term" value="F:heparin binding"/>
    <property type="evidence" value="ECO:0000250"/>
    <property type="project" value="UniProtKB"/>
</dbReference>
<dbReference type="GO" id="GO:0019865">
    <property type="term" value="F:immunoglobulin binding"/>
    <property type="evidence" value="ECO:0000250"/>
    <property type="project" value="UniProtKB"/>
</dbReference>
<dbReference type="GO" id="GO:0046872">
    <property type="term" value="F:metal ion binding"/>
    <property type="evidence" value="ECO:0000250"/>
    <property type="project" value="UniProtKB"/>
</dbReference>
<dbReference type="GO" id="GO:0004867">
    <property type="term" value="F:serine-type endopeptidase inhibitor activity"/>
    <property type="evidence" value="ECO:0000315"/>
    <property type="project" value="MGI"/>
</dbReference>
<dbReference type="GO" id="GO:0005102">
    <property type="term" value="F:signaling receptor binding"/>
    <property type="evidence" value="ECO:0000250"/>
    <property type="project" value="UniProtKB"/>
</dbReference>
<dbReference type="GO" id="GO:0008270">
    <property type="term" value="F:zinc ion binding"/>
    <property type="evidence" value="ECO:0000250"/>
    <property type="project" value="UniProtKB"/>
</dbReference>
<dbReference type="GO" id="GO:0001525">
    <property type="term" value="P:angiogenesis"/>
    <property type="evidence" value="ECO:0007669"/>
    <property type="project" value="UniProtKB-KW"/>
</dbReference>
<dbReference type="GO" id="GO:0061844">
    <property type="term" value="P:antimicrobial humoral immune response mediated by antimicrobial peptide"/>
    <property type="evidence" value="ECO:0000315"/>
    <property type="project" value="UniProtKB"/>
</dbReference>
<dbReference type="GO" id="GO:0006935">
    <property type="term" value="P:chemotaxis"/>
    <property type="evidence" value="ECO:0007669"/>
    <property type="project" value="UniProtKB-KW"/>
</dbReference>
<dbReference type="GO" id="GO:0050832">
    <property type="term" value="P:defense response to fungus"/>
    <property type="evidence" value="ECO:0000315"/>
    <property type="project" value="UniProtKB"/>
</dbReference>
<dbReference type="GO" id="GO:0042730">
    <property type="term" value="P:fibrinolysis"/>
    <property type="evidence" value="ECO:0000315"/>
    <property type="project" value="MGI"/>
</dbReference>
<dbReference type="GO" id="GO:0016525">
    <property type="term" value="P:negative regulation of angiogenesis"/>
    <property type="evidence" value="ECO:0000315"/>
    <property type="project" value="UniProtKB"/>
</dbReference>
<dbReference type="GO" id="GO:0043537">
    <property type="term" value="P:negative regulation of blood vessel endothelial cell migration"/>
    <property type="evidence" value="ECO:0000315"/>
    <property type="project" value="UniProtKB"/>
</dbReference>
<dbReference type="GO" id="GO:0007162">
    <property type="term" value="P:negative regulation of cell adhesion"/>
    <property type="evidence" value="ECO:0000250"/>
    <property type="project" value="UniProtKB"/>
</dbReference>
<dbReference type="GO" id="GO:0033629">
    <property type="term" value="P:negative regulation of cell adhesion mediated by integrin"/>
    <property type="evidence" value="ECO:0000250"/>
    <property type="project" value="UniProtKB"/>
</dbReference>
<dbReference type="GO" id="GO:0030308">
    <property type="term" value="P:negative regulation of cell growth"/>
    <property type="evidence" value="ECO:0000314"/>
    <property type="project" value="UniProtKB"/>
</dbReference>
<dbReference type="GO" id="GO:0008285">
    <property type="term" value="P:negative regulation of cell population proliferation"/>
    <property type="evidence" value="ECO:0000250"/>
    <property type="project" value="UniProtKB"/>
</dbReference>
<dbReference type="GO" id="GO:2001027">
    <property type="term" value="P:negative regulation of endothelial cell chemotaxis"/>
    <property type="evidence" value="ECO:0000250"/>
    <property type="project" value="UniProtKB"/>
</dbReference>
<dbReference type="GO" id="GO:0051918">
    <property type="term" value="P:negative regulation of fibrinolysis"/>
    <property type="evidence" value="ECO:0000315"/>
    <property type="project" value="MGI"/>
</dbReference>
<dbReference type="GO" id="GO:0010593">
    <property type="term" value="P:negative regulation of lamellipodium assembly"/>
    <property type="evidence" value="ECO:0000250"/>
    <property type="project" value="UniProtKB"/>
</dbReference>
<dbReference type="GO" id="GO:1900747">
    <property type="term" value="P:negative regulation of vascular endothelial growth factor signaling pathway"/>
    <property type="evidence" value="ECO:0000250"/>
    <property type="project" value="UniProtKB"/>
</dbReference>
<dbReference type="GO" id="GO:0030168">
    <property type="term" value="P:platelet activation"/>
    <property type="evidence" value="ECO:0000250"/>
    <property type="project" value="UniProtKB"/>
</dbReference>
<dbReference type="GO" id="GO:0043065">
    <property type="term" value="P:positive regulation of apoptotic process"/>
    <property type="evidence" value="ECO:0000250"/>
    <property type="project" value="UniProtKB"/>
</dbReference>
<dbReference type="GO" id="GO:2000504">
    <property type="term" value="P:positive regulation of blood vessel remodeling"/>
    <property type="evidence" value="ECO:0000315"/>
    <property type="project" value="UniProtKB"/>
</dbReference>
<dbReference type="GO" id="GO:0051894">
    <property type="term" value="P:positive regulation of focal adhesion assembly"/>
    <property type="evidence" value="ECO:0000250"/>
    <property type="project" value="UniProtKB"/>
</dbReference>
<dbReference type="GO" id="GO:0002839">
    <property type="term" value="P:positive regulation of immune response to tumor cell"/>
    <property type="evidence" value="ECO:0000315"/>
    <property type="project" value="UniProtKB"/>
</dbReference>
<dbReference type="GO" id="GO:0032956">
    <property type="term" value="P:regulation of actin cytoskeleton organization"/>
    <property type="evidence" value="ECO:0000250"/>
    <property type="project" value="UniProtKB"/>
</dbReference>
<dbReference type="GO" id="GO:0030193">
    <property type="term" value="P:regulation of blood coagulation"/>
    <property type="evidence" value="ECO:0000315"/>
    <property type="project" value="UniProtKB"/>
</dbReference>
<dbReference type="GO" id="GO:0010468">
    <property type="term" value="P:regulation of gene expression"/>
    <property type="evidence" value="ECO:0000315"/>
    <property type="project" value="UniProtKB"/>
</dbReference>
<dbReference type="GO" id="GO:0050730">
    <property type="term" value="P:regulation of peptidyl-tyrosine phosphorylation"/>
    <property type="evidence" value="ECO:0000250"/>
    <property type="project" value="UniProtKB"/>
</dbReference>
<dbReference type="GO" id="GO:0010543">
    <property type="term" value="P:regulation of platelet activation"/>
    <property type="evidence" value="ECO:0000315"/>
    <property type="project" value="UniProtKB"/>
</dbReference>
<dbReference type="GO" id="GO:0043254">
    <property type="term" value="P:regulation of protein-containing complex assembly"/>
    <property type="evidence" value="ECO:0000250"/>
    <property type="project" value="UniProtKB"/>
</dbReference>
<dbReference type="FunFam" id="3.10.450.10:FF:000005">
    <property type="entry name" value="Histidine-rich glycoprotein"/>
    <property type="match status" value="1"/>
</dbReference>
<dbReference type="FunFam" id="3.10.450.10:FF:000015">
    <property type="entry name" value="Histidine-rich glycoprotein"/>
    <property type="match status" value="1"/>
</dbReference>
<dbReference type="Gene3D" id="3.10.450.10">
    <property type="match status" value="2"/>
</dbReference>
<dbReference type="InterPro" id="IPR000010">
    <property type="entry name" value="Cystatin_dom"/>
</dbReference>
<dbReference type="InterPro" id="IPR046350">
    <property type="entry name" value="Cystatin_sf"/>
</dbReference>
<dbReference type="InterPro" id="IPR050735">
    <property type="entry name" value="Kininogen_Fetuin_HRG"/>
</dbReference>
<dbReference type="PANTHER" id="PTHR13814">
    <property type="entry name" value="FETUIN"/>
    <property type="match status" value="1"/>
</dbReference>
<dbReference type="PANTHER" id="PTHR13814:SF3">
    <property type="entry name" value="HISTIDINE-RICH GLYCOPROTEIN"/>
    <property type="match status" value="1"/>
</dbReference>
<dbReference type="SMART" id="SM00043">
    <property type="entry name" value="CY"/>
    <property type="match status" value="2"/>
</dbReference>
<dbReference type="SUPFAM" id="SSF54403">
    <property type="entry name" value="Cystatin/monellin"/>
    <property type="match status" value="1"/>
</dbReference>
<reference key="1">
    <citation type="journal article" date="2000" name="Immunol. Cell Biol.">
        <title>Murine histidine-rich glycoprotein: cloning, characterization and cellular origin.</title>
        <authorList>
            <person name="Hulett M.D."/>
            <person name="Parish C.R."/>
        </authorList>
    </citation>
    <scope>NUCLEOTIDE SEQUENCE [MRNA]</scope>
    <scope>TISSUE SPECIFICITY</scope>
    <source>
        <strain>129</strain>
    </source>
</reference>
<reference key="2">
    <citation type="journal article" date="2004" name="Genome">
        <title>Identification of fetuin-B as a member of a cystatin-like gene family on mouse chromosome 16 with tumor suppressor activity.</title>
        <authorList>
            <person name="Hsu S.J."/>
            <person name="Nagase H."/>
            <person name="Balmain A."/>
        </authorList>
    </citation>
    <scope>NUCLEOTIDE SEQUENCE [GENOMIC DNA / MRNA]</scope>
    <source>
        <strain>NIH/Ola</strain>
    </source>
</reference>
<reference key="3">
    <citation type="journal article" date="2005" name="J. Thromb. Haemost.">
        <title>Enhanced blood coagulation and fibrinolysis in mice lacking histidine-rich glycoprotein (HRG).</title>
        <authorList>
            <person name="Tsuchida-Straeten N."/>
            <person name="Ensslen S."/>
            <person name="Schafer C."/>
            <person name="Woltje M."/>
            <person name="Denecke B."/>
            <person name="Moser M."/>
            <person name="Graber S."/>
            <person name="Wakabayashi S."/>
            <person name="Koide T."/>
            <person name="Jahnen-Dechent W."/>
        </authorList>
    </citation>
    <scope>NUCLEOTIDE SEQUENCE [MRNA]</scope>
    <scope>DISRUPTION PHENOTYPE</scope>
    <scope>FUNCTION</scope>
    <source>
        <strain>BALB/cJ</strain>
        <tissue>Liver</tissue>
    </source>
</reference>
<reference key="4">
    <citation type="journal article" date="2004" name="Genome Res.">
        <title>The status, quality, and expansion of the NIH full-length cDNA project: the Mammalian Gene Collection (MGC).</title>
        <authorList>
            <consortium name="The MGC Project Team"/>
        </authorList>
    </citation>
    <scope>NUCLEOTIDE SEQUENCE [LARGE SCALE MRNA]</scope>
    <source>
        <strain>FVB/N</strain>
        <tissue>Liver</tissue>
    </source>
</reference>
<reference key="5">
    <citation type="journal article" date="2005" name="Matrix Biol.">
        <title>The antiangiogenic effect of thrombospondin-2 is mediated by CD36 and modulated by histidine-rich glycoprotein.</title>
        <authorList>
            <person name="Simantov R."/>
            <person name="Febbraio M."/>
            <person name="Silverstein R.L."/>
        </authorList>
    </citation>
    <scope>INTERACTION WITH THBS2</scope>
    <scope>FUNCTION</scope>
</reference>
<reference key="6">
    <citation type="journal article" date="2007" name="J. Proteome Res.">
        <title>Enhanced analysis of the mouse plasma proteome using cysteine-containing tryptic glycopeptides.</title>
        <authorList>
            <person name="Bernhard O.K."/>
            <person name="Kapp E.A."/>
            <person name="Simpson R.J."/>
        </authorList>
    </citation>
    <scope>GLYCOSYLATION [LARGE SCALE ANALYSIS] AT ASN-200</scope>
    <source>
        <strain>C57BL/6J</strain>
        <tissue>Plasma</tissue>
    </source>
</reference>
<reference key="7">
    <citation type="journal article" date="2008" name="PLoS Pathog.">
        <title>Histidine-rich glycoprotein protects from systemic Candida infection.</title>
        <authorList>
            <person name="Rydengard V."/>
            <person name="Shannon O."/>
            <person name="Lundqvist K."/>
            <person name="Kacprzyk L."/>
            <person name="Chalupka A."/>
            <person name="Olsson A.K."/>
            <person name="Morgelin M."/>
            <person name="Jahnen-Dechent W."/>
            <person name="Malmsten M."/>
            <person name="Schmidtchen A."/>
        </authorList>
    </citation>
    <scope>DISRUPTION PHENOTYPE</scope>
    <scope>TISSUE SPECIFICITY</scope>
    <scope>FUNCTION</scope>
</reference>
<reference key="8">
    <citation type="journal article" date="2009" name="Mol. Cancer Res.">
        <title>Activated platelets provide a functional microenvironment for the antiangiogenic fragment of histidine-rich glycoprotein.</title>
        <authorList>
            <person name="Thulin A."/>
            <person name="Ringvall M."/>
            <person name="Dimberg A."/>
            <person name="Karehed K."/>
            <person name="Vaisanen T."/>
            <person name="Vaisanen M.R."/>
            <person name="Hamad O."/>
            <person name="Wang J."/>
            <person name="Bjerkvig R."/>
            <person name="Nilsson B."/>
            <person name="Pihlajaniemi T."/>
            <person name="Akerud H."/>
            <person name="Pietras K."/>
            <person name="Jahnen-Dechent W."/>
            <person name="Siegbahn A."/>
            <person name="Olsson A.K."/>
        </authorList>
    </citation>
    <scope>DISRUPTION PHENOTYPE</scope>
    <scope>FUNCTION</scope>
</reference>
<reference key="9">
    <citation type="journal article" date="2010" name="Cell">
        <title>A tissue-specific atlas of mouse protein phosphorylation and expression.</title>
        <authorList>
            <person name="Huttlin E.L."/>
            <person name="Jedrychowski M.P."/>
            <person name="Elias J.E."/>
            <person name="Goswami T."/>
            <person name="Rad R."/>
            <person name="Beausoleil S.A."/>
            <person name="Villen J."/>
            <person name="Haas W."/>
            <person name="Sowa M.E."/>
            <person name="Gygi S.P."/>
        </authorList>
    </citation>
    <scope>IDENTIFICATION BY MASS SPECTROMETRY [LARGE SCALE ANALYSIS]</scope>
    <source>
        <tissue>Brown adipose tissue</tissue>
        <tissue>Heart</tissue>
        <tissue>Liver</tissue>
        <tissue>Lung</tissue>
        <tissue>Spleen</tissue>
        <tissue>Testis</tissue>
    </source>
</reference>
<reference key="10">
    <citation type="journal article" date="2012" name="Cancer Res.">
        <title>Genetic deficiency in plasma protein HRG enhances tumor growth and metastasis by exacerbating immune escape and vessel abnormalization.</title>
        <authorList>
            <person name="Tugues S."/>
            <person name="Honjo S."/>
            <person name="Konig C."/>
            <person name="Noguer O."/>
            <person name="Hedlund M."/>
            <person name="Botling J."/>
            <person name="Deschoemaeker S."/>
            <person name="Wenes M."/>
            <person name="Rolny C."/>
            <person name="Jahnen-Dechent W."/>
            <person name="Mazzone M."/>
            <person name="Claesson-Welsh L."/>
        </authorList>
    </citation>
    <scope>FUNCTION</scope>
    <scope>DISRUPTION PHENOTYPE</scope>
</reference>
<reference key="11">
    <citation type="journal article" date="2011" name="PLoS ONE">
        <title>Enhanced platelet activation mediates the accelerated angiogenic switch in mice lacking histidine-rich glycoprotein.</title>
        <authorList>
            <person name="Ringvall M."/>
            <person name="Thulin A."/>
            <person name="Zhang L."/>
            <person name="Cedervall J."/>
            <person name="Tsuchida-Straeten N."/>
            <person name="Jahnen-Dechent W."/>
            <person name="Siegbahn A."/>
            <person name="Olsson A.K."/>
        </authorList>
    </citation>
    <scope>DISRUPTION PHENOTYPE</scope>
</reference>
<organism>
    <name type="scientific">Mus musculus</name>
    <name type="common">Mouse</name>
    <dbReference type="NCBI Taxonomy" id="10090"/>
    <lineage>
        <taxon>Eukaryota</taxon>
        <taxon>Metazoa</taxon>
        <taxon>Chordata</taxon>
        <taxon>Craniata</taxon>
        <taxon>Vertebrata</taxon>
        <taxon>Euteleostomi</taxon>
        <taxon>Mammalia</taxon>
        <taxon>Eutheria</taxon>
        <taxon>Euarchontoglires</taxon>
        <taxon>Glires</taxon>
        <taxon>Rodentia</taxon>
        <taxon>Myomorpha</taxon>
        <taxon>Muroidea</taxon>
        <taxon>Muridae</taxon>
        <taxon>Murinae</taxon>
        <taxon>Mus</taxon>
        <taxon>Mus</taxon>
    </lineage>
</organism>